<reference key="1">
    <citation type="submission" date="1996-10" db="EMBL/GenBank/DDBJ databases">
        <title>Bacillus subtilis atpC to ureA chromosomal region.</title>
        <authorList>
            <person name="Glaser P."/>
            <person name="Danchin A."/>
            <person name="Kunst F."/>
            <person name="Moszer I."/>
        </authorList>
    </citation>
    <scope>NUCLEOTIDE SEQUENCE [GENOMIC DNA]</scope>
    <source>
        <strain>168</strain>
    </source>
</reference>
<reference key="2">
    <citation type="journal article" date="1997" name="Nature">
        <title>The complete genome sequence of the Gram-positive bacterium Bacillus subtilis.</title>
        <authorList>
            <person name="Kunst F."/>
            <person name="Ogasawara N."/>
            <person name="Moszer I."/>
            <person name="Albertini A.M."/>
            <person name="Alloni G."/>
            <person name="Azevedo V."/>
            <person name="Bertero M.G."/>
            <person name="Bessieres P."/>
            <person name="Bolotin A."/>
            <person name="Borchert S."/>
            <person name="Borriss R."/>
            <person name="Boursier L."/>
            <person name="Brans A."/>
            <person name="Braun M."/>
            <person name="Brignell S.C."/>
            <person name="Bron S."/>
            <person name="Brouillet S."/>
            <person name="Bruschi C.V."/>
            <person name="Caldwell B."/>
            <person name="Capuano V."/>
            <person name="Carter N.M."/>
            <person name="Choi S.-K."/>
            <person name="Codani J.-J."/>
            <person name="Connerton I.F."/>
            <person name="Cummings N.J."/>
            <person name="Daniel R.A."/>
            <person name="Denizot F."/>
            <person name="Devine K.M."/>
            <person name="Duesterhoeft A."/>
            <person name="Ehrlich S.D."/>
            <person name="Emmerson P.T."/>
            <person name="Entian K.-D."/>
            <person name="Errington J."/>
            <person name="Fabret C."/>
            <person name="Ferrari E."/>
            <person name="Foulger D."/>
            <person name="Fritz C."/>
            <person name="Fujita M."/>
            <person name="Fujita Y."/>
            <person name="Fuma S."/>
            <person name="Galizzi A."/>
            <person name="Galleron N."/>
            <person name="Ghim S.-Y."/>
            <person name="Glaser P."/>
            <person name="Goffeau A."/>
            <person name="Golightly E.J."/>
            <person name="Grandi G."/>
            <person name="Guiseppi G."/>
            <person name="Guy B.J."/>
            <person name="Haga K."/>
            <person name="Haiech J."/>
            <person name="Harwood C.R."/>
            <person name="Henaut A."/>
            <person name="Hilbert H."/>
            <person name="Holsappel S."/>
            <person name="Hosono S."/>
            <person name="Hullo M.-F."/>
            <person name="Itaya M."/>
            <person name="Jones L.-M."/>
            <person name="Joris B."/>
            <person name="Karamata D."/>
            <person name="Kasahara Y."/>
            <person name="Klaerr-Blanchard M."/>
            <person name="Klein C."/>
            <person name="Kobayashi Y."/>
            <person name="Koetter P."/>
            <person name="Koningstein G."/>
            <person name="Krogh S."/>
            <person name="Kumano M."/>
            <person name="Kurita K."/>
            <person name="Lapidus A."/>
            <person name="Lardinois S."/>
            <person name="Lauber J."/>
            <person name="Lazarevic V."/>
            <person name="Lee S.-M."/>
            <person name="Levine A."/>
            <person name="Liu H."/>
            <person name="Masuda S."/>
            <person name="Mauel C."/>
            <person name="Medigue C."/>
            <person name="Medina N."/>
            <person name="Mellado R.P."/>
            <person name="Mizuno M."/>
            <person name="Moestl D."/>
            <person name="Nakai S."/>
            <person name="Noback M."/>
            <person name="Noone D."/>
            <person name="O'Reilly M."/>
            <person name="Ogawa K."/>
            <person name="Ogiwara A."/>
            <person name="Oudega B."/>
            <person name="Park S.-H."/>
            <person name="Parro V."/>
            <person name="Pohl T.M."/>
            <person name="Portetelle D."/>
            <person name="Porwollik S."/>
            <person name="Prescott A.M."/>
            <person name="Presecan E."/>
            <person name="Pujic P."/>
            <person name="Purnelle B."/>
            <person name="Rapoport G."/>
            <person name="Rey M."/>
            <person name="Reynolds S."/>
            <person name="Rieger M."/>
            <person name="Rivolta C."/>
            <person name="Rocha E."/>
            <person name="Roche B."/>
            <person name="Rose M."/>
            <person name="Sadaie Y."/>
            <person name="Sato T."/>
            <person name="Scanlan E."/>
            <person name="Schleich S."/>
            <person name="Schroeter R."/>
            <person name="Scoffone F."/>
            <person name="Sekiguchi J."/>
            <person name="Sekowska A."/>
            <person name="Seror S.J."/>
            <person name="Serror P."/>
            <person name="Shin B.-S."/>
            <person name="Soldo B."/>
            <person name="Sorokin A."/>
            <person name="Tacconi E."/>
            <person name="Takagi T."/>
            <person name="Takahashi H."/>
            <person name="Takemaru K."/>
            <person name="Takeuchi M."/>
            <person name="Tamakoshi A."/>
            <person name="Tanaka T."/>
            <person name="Terpstra P."/>
            <person name="Tognoni A."/>
            <person name="Tosato V."/>
            <person name="Uchiyama S."/>
            <person name="Vandenbol M."/>
            <person name="Vannier F."/>
            <person name="Vassarotti A."/>
            <person name="Viari A."/>
            <person name="Wambutt R."/>
            <person name="Wedler E."/>
            <person name="Wedler H."/>
            <person name="Weitzenegger T."/>
            <person name="Winters P."/>
            <person name="Wipat A."/>
            <person name="Yamamoto H."/>
            <person name="Yamane K."/>
            <person name="Yasumoto K."/>
            <person name="Yata K."/>
            <person name="Yoshida K."/>
            <person name="Yoshikawa H.-F."/>
            <person name="Zumstein E."/>
            <person name="Yoshikawa H."/>
            <person name="Danchin A."/>
        </authorList>
    </citation>
    <scope>NUCLEOTIDE SEQUENCE [LARGE SCALE GENOMIC DNA]</scope>
    <source>
        <strain>168</strain>
    </source>
</reference>
<reference key="3">
    <citation type="book" date="2000" name="Proceedings of Genome 2000: international conference of microbial and model genomes">
        <title>Possible roles of the murAA (murA) and murAB (murZ) duett in B.subtilis.</title>
        <authorList>
            <person name="Studer R.E."/>
            <person name="Roten C.A.H."/>
            <person name="Kamarata D."/>
        </authorList>
    </citation>
    <scope>CHARACTERIZATION</scope>
</reference>
<keyword id="KW-0131">Cell cycle</keyword>
<keyword id="KW-0132">Cell division</keyword>
<keyword id="KW-0133">Cell shape</keyword>
<keyword id="KW-0961">Cell wall biogenesis/degradation</keyword>
<keyword id="KW-0963">Cytoplasm</keyword>
<keyword id="KW-0573">Peptidoglycan synthesis</keyword>
<keyword id="KW-0670">Pyruvate</keyword>
<keyword id="KW-1185">Reference proteome</keyword>
<keyword id="KW-0808">Transferase</keyword>
<sequence length="436" mass="46701">MEKIIVRGGQKLNGTVKVEGAKNAVLPVIAASLLASEEKSVICDVPTLSDVYTINEVLRHLGADVHFENNEVTVNASYALQTEAPFEYVRKMRASVLVMGPLLARTGHARVALPGGCAIGSRPIDQHLKGFEAMGAEIKVGNGFIEAEVKGRLQGAKIYLDFPSVGATENLIMAAALAEGTTTLENVAKEPEIVDLANYINGMGGKIRGAGTGTIKIEGVEKLHGVKHHIIPDRIEAGTFMVAAAITEGNVLVKGAVPEHLTSLIAKMEEMGVTIKDEGEGLRVIGPKELKPIDIKTMPHPGFPTDMQSQMMALLLRASGTSMITETVFENRFMHAEEFRRMNGDIKIEGRSVIINGPVQLQGAEVAATDLRAGAALILAGLVAEGHTRVTELKHLDRGYVDFHQKLAALGADIERVNDESASEQENKEVVSDLNA</sequence>
<evidence type="ECO:0000255" key="1">
    <source>
        <dbReference type="HAMAP-Rule" id="MF_00111"/>
    </source>
</evidence>
<evidence type="ECO:0000305" key="2"/>
<gene>
    <name evidence="1" type="primary">murAA</name>
    <name type="synonym">murA</name>
    <name type="ordered locus">BSU36760</name>
</gene>
<name>MURA1_BACSU</name>
<protein>
    <recommendedName>
        <fullName evidence="1">UDP-N-acetylglucosamine 1-carboxyvinyltransferase 1</fullName>
        <ecNumber evidence="1">2.5.1.7</ecNumber>
    </recommendedName>
    <alternativeName>
        <fullName evidence="1">Enoylpyruvate transferase 1</fullName>
    </alternativeName>
    <alternativeName>
        <fullName evidence="1">UDP-N-acetylglucosamine enolpyruvyl transferase 1</fullName>
        <shortName evidence="1">EPT 1</shortName>
    </alternativeName>
</protein>
<comment type="function">
    <text>Cell wall formation. Adds enolpyruvyl to UDP-N-acetylglucosamine. Essential for cell growth.</text>
</comment>
<comment type="catalytic activity">
    <reaction evidence="1">
        <text>phosphoenolpyruvate + UDP-N-acetyl-alpha-D-glucosamine = UDP-N-acetyl-3-O-(1-carboxyvinyl)-alpha-D-glucosamine + phosphate</text>
        <dbReference type="Rhea" id="RHEA:18681"/>
        <dbReference type="ChEBI" id="CHEBI:43474"/>
        <dbReference type="ChEBI" id="CHEBI:57705"/>
        <dbReference type="ChEBI" id="CHEBI:58702"/>
        <dbReference type="ChEBI" id="CHEBI:68483"/>
        <dbReference type="EC" id="2.5.1.7"/>
    </reaction>
</comment>
<comment type="pathway">
    <text evidence="1">Cell wall biogenesis; peptidoglycan biosynthesis.</text>
</comment>
<comment type="subcellular location">
    <subcellularLocation>
        <location evidence="1 2">Cytoplasm</location>
    </subcellularLocation>
</comment>
<comment type="similarity">
    <text evidence="1">Belongs to the EPSP synthase family. MurA subfamily.</text>
</comment>
<proteinExistence type="evidence at protein level"/>
<feature type="chain" id="PRO_0000178848" description="UDP-N-acetylglucosamine 1-carboxyvinyltransferase 1">
    <location>
        <begin position="1"/>
        <end position="436"/>
    </location>
</feature>
<feature type="active site" description="Proton donor" evidence="1">
    <location>
        <position position="117"/>
    </location>
</feature>
<feature type="binding site" evidence="1">
    <location>
        <begin position="22"/>
        <end position="23"/>
    </location>
    <ligand>
        <name>phosphoenolpyruvate</name>
        <dbReference type="ChEBI" id="CHEBI:58702"/>
    </ligand>
</feature>
<feature type="binding site" evidence="1">
    <location>
        <position position="93"/>
    </location>
    <ligand>
        <name>UDP-N-acetyl-alpha-D-glucosamine</name>
        <dbReference type="ChEBI" id="CHEBI:57705"/>
    </ligand>
</feature>
<feature type="binding site" evidence="1">
    <location>
        <begin position="122"/>
        <end position="126"/>
    </location>
    <ligand>
        <name>UDP-N-acetyl-alpha-D-glucosamine</name>
        <dbReference type="ChEBI" id="CHEBI:57705"/>
    </ligand>
</feature>
<feature type="binding site" evidence="1">
    <location>
        <position position="306"/>
    </location>
    <ligand>
        <name>UDP-N-acetyl-alpha-D-glucosamine</name>
        <dbReference type="ChEBI" id="CHEBI:57705"/>
    </ligand>
</feature>
<feature type="binding site" evidence="1">
    <location>
        <position position="328"/>
    </location>
    <ligand>
        <name>UDP-N-acetyl-alpha-D-glucosamine</name>
        <dbReference type="ChEBI" id="CHEBI:57705"/>
    </ligand>
</feature>
<feature type="modified residue" description="2-(S-cysteinyl)pyruvic acid O-phosphothioketal" evidence="1">
    <location>
        <position position="117"/>
    </location>
</feature>
<accession>P70965</accession>
<dbReference type="EC" id="2.5.1.7" evidence="1"/>
<dbReference type="EMBL" id="Z81356">
    <property type="protein sequence ID" value="CAB03688.1"/>
    <property type="molecule type" value="Genomic_DNA"/>
</dbReference>
<dbReference type="EMBL" id="AL009126">
    <property type="protein sequence ID" value="CAB15693.1"/>
    <property type="molecule type" value="Genomic_DNA"/>
</dbReference>
<dbReference type="PIR" id="A69662">
    <property type="entry name" value="A69662"/>
</dbReference>
<dbReference type="RefSeq" id="NP_391557.1">
    <property type="nucleotide sequence ID" value="NC_000964.3"/>
</dbReference>
<dbReference type="RefSeq" id="WP_003227695.1">
    <property type="nucleotide sequence ID" value="NZ_OZ025638.1"/>
</dbReference>
<dbReference type="SMR" id="P70965"/>
<dbReference type="FunCoup" id="P70965">
    <property type="interactions" value="421"/>
</dbReference>
<dbReference type="IntAct" id="P70965">
    <property type="interactions" value="1"/>
</dbReference>
<dbReference type="STRING" id="224308.BSU36760"/>
<dbReference type="jPOST" id="P70965"/>
<dbReference type="PaxDb" id="224308-BSU36760"/>
<dbReference type="EnsemblBacteria" id="CAB15693">
    <property type="protein sequence ID" value="CAB15693"/>
    <property type="gene ID" value="BSU_36760"/>
</dbReference>
<dbReference type="GeneID" id="936980"/>
<dbReference type="KEGG" id="bsu:BSU36760"/>
<dbReference type="PATRIC" id="fig|224308.179.peg.3982"/>
<dbReference type="eggNOG" id="COG0766">
    <property type="taxonomic scope" value="Bacteria"/>
</dbReference>
<dbReference type="InParanoid" id="P70965"/>
<dbReference type="OrthoDB" id="9803760at2"/>
<dbReference type="PhylomeDB" id="P70965"/>
<dbReference type="BioCyc" id="BSUB:BSU36760-MONOMER"/>
<dbReference type="UniPathway" id="UPA00219"/>
<dbReference type="Proteomes" id="UP000001570">
    <property type="component" value="Chromosome"/>
</dbReference>
<dbReference type="GO" id="GO:0005737">
    <property type="term" value="C:cytoplasm"/>
    <property type="evidence" value="ECO:0007669"/>
    <property type="project" value="UniProtKB-SubCell"/>
</dbReference>
<dbReference type="GO" id="GO:0008760">
    <property type="term" value="F:UDP-N-acetylglucosamine 1-carboxyvinyltransferase activity"/>
    <property type="evidence" value="ECO:0007669"/>
    <property type="project" value="UniProtKB-UniRule"/>
</dbReference>
<dbReference type="GO" id="GO:0051301">
    <property type="term" value="P:cell division"/>
    <property type="evidence" value="ECO:0007669"/>
    <property type="project" value="UniProtKB-KW"/>
</dbReference>
<dbReference type="GO" id="GO:0071555">
    <property type="term" value="P:cell wall organization"/>
    <property type="evidence" value="ECO:0007669"/>
    <property type="project" value="UniProtKB-KW"/>
</dbReference>
<dbReference type="GO" id="GO:0009252">
    <property type="term" value="P:peptidoglycan biosynthetic process"/>
    <property type="evidence" value="ECO:0007669"/>
    <property type="project" value="UniProtKB-UniRule"/>
</dbReference>
<dbReference type="GO" id="GO:0008360">
    <property type="term" value="P:regulation of cell shape"/>
    <property type="evidence" value="ECO:0007669"/>
    <property type="project" value="UniProtKB-KW"/>
</dbReference>
<dbReference type="GO" id="GO:0019277">
    <property type="term" value="P:UDP-N-acetylgalactosamine biosynthetic process"/>
    <property type="evidence" value="ECO:0007669"/>
    <property type="project" value="InterPro"/>
</dbReference>
<dbReference type="CDD" id="cd01555">
    <property type="entry name" value="UdpNAET"/>
    <property type="match status" value="1"/>
</dbReference>
<dbReference type="FunFam" id="3.65.10.10:FF:000001">
    <property type="entry name" value="UDP-N-acetylglucosamine 1-carboxyvinyltransferase"/>
    <property type="match status" value="1"/>
</dbReference>
<dbReference type="Gene3D" id="3.65.10.10">
    <property type="entry name" value="Enolpyruvate transferase domain"/>
    <property type="match status" value="2"/>
</dbReference>
<dbReference type="HAMAP" id="MF_00111">
    <property type="entry name" value="MurA"/>
    <property type="match status" value="1"/>
</dbReference>
<dbReference type="InterPro" id="IPR001986">
    <property type="entry name" value="Enolpyruvate_Tfrase_dom"/>
</dbReference>
<dbReference type="InterPro" id="IPR036968">
    <property type="entry name" value="Enolpyruvate_Tfrase_sf"/>
</dbReference>
<dbReference type="InterPro" id="IPR050068">
    <property type="entry name" value="MurA_subfamily"/>
</dbReference>
<dbReference type="InterPro" id="IPR013792">
    <property type="entry name" value="RNA3'P_cycl/enolpyr_Trfase_a/b"/>
</dbReference>
<dbReference type="InterPro" id="IPR005750">
    <property type="entry name" value="UDP_GlcNAc_COvinyl_MurA"/>
</dbReference>
<dbReference type="NCBIfam" id="TIGR01072">
    <property type="entry name" value="murA"/>
    <property type="match status" value="1"/>
</dbReference>
<dbReference type="NCBIfam" id="NF006873">
    <property type="entry name" value="PRK09369.1"/>
    <property type="match status" value="1"/>
</dbReference>
<dbReference type="PANTHER" id="PTHR43783">
    <property type="entry name" value="UDP-N-ACETYLGLUCOSAMINE 1-CARBOXYVINYLTRANSFERASE"/>
    <property type="match status" value="1"/>
</dbReference>
<dbReference type="PANTHER" id="PTHR43783:SF1">
    <property type="entry name" value="UDP-N-ACETYLGLUCOSAMINE 1-CARBOXYVINYLTRANSFERASE"/>
    <property type="match status" value="1"/>
</dbReference>
<dbReference type="Pfam" id="PF00275">
    <property type="entry name" value="EPSP_synthase"/>
    <property type="match status" value="1"/>
</dbReference>
<dbReference type="SUPFAM" id="SSF55205">
    <property type="entry name" value="EPT/RTPC-like"/>
    <property type="match status" value="1"/>
</dbReference>
<organism>
    <name type="scientific">Bacillus subtilis (strain 168)</name>
    <dbReference type="NCBI Taxonomy" id="224308"/>
    <lineage>
        <taxon>Bacteria</taxon>
        <taxon>Bacillati</taxon>
        <taxon>Bacillota</taxon>
        <taxon>Bacilli</taxon>
        <taxon>Bacillales</taxon>
        <taxon>Bacillaceae</taxon>
        <taxon>Bacillus</taxon>
    </lineage>
</organism>